<reference key="1">
    <citation type="journal article" date="2000" name="DNA Res.">
        <title>Structural analysis of Arabidopsis thaliana chromosome 5. X. Sequence features of the regions of 3,076,755 bp covered by sixty P1 and TAC clones.</title>
        <authorList>
            <person name="Sato S."/>
            <person name="Nakamura Y."/>
            <person name="Kaneko T."/>
            <person name="Katoh T."/>
            <person name="Asamizu E."/>
            <person name="Kotani H."/>
            <person name="Tabata S."/>
        </authorList>
    </citation>
    <scope>NUCLEOTIDE SEQUENCE [LARGE SCALE GENOMIC DNA]</scope>
    <source>
        <strain>cv. Columbia</strain>
    </source>
</reference>
<reference key="2">
    <citation type="journal article" date="2017" name="Plant J.">
        <title>Araport11: a complete reannotation of the Arabidopsis thaliana reference genome.</title>
        <authorList>
            <person name="Cheng C.Y."/>
            <person name="Krishnakumar V."/>
            <person name="Chan A.P."/>
            <person name="Thibaud-Nissen F."/>
            <person name="Schobel S."/>
            <person name="Town C.D."/>
        </authorList>
    </citation>
    <scope>GENOME REANNOTATION</scope>
    <source>
        <strain>cv. Columbia</strain>
    </source>
</reference>
<reference key="3">
    <citation type="journal article" date="2003" name="Science">
        <title>Empirical analysis of transcriptional activity in the Arabidopsis genome.</title>
        <authorList>
            <person name="Yamada K."/>
            <person name="Lim J."/>
            <person name="Dale J.M."/>
            <person name="Chen H."/>
            <person name="Shinn P."/>
            <person name="Palm C.J."/>
            <person name="Southwick A.M."/>
            <person name="Wu H.C."/>
            <person name="Kim C.J."/>
            <person name="Nguyen M."/>
            <person name="Pham P.K."/>
            <person name="Cheuk R.F."/>
            <person name="Karlin-Newmann G."/>
            <person name="Liu S.X."/>
            <person name="Lam B."/>
            <person name="Sakano H."/>
            <person name="Wu T."/>
            <person name="Yu G."/>
            <person name="Miranda M."/>
            <person name="Quach H.L."/>
            <person name="Tripp M."/>
            <person name="Chang C.H."/>
            <person name="Lee J.M."/>
            <person name="Toriumi M.J."/>
            <person name="Chan M.M."/>
            <person name="Tang C.C."/>
            <person name="Onodera C.S."/>
            <person name="Deng J.M."/>
            <person name="Akiyama K."/>
            <person name="Ansari Y."/>
            <person name="Arakawa T."/>
            <person name="Banh J."/>
            <person name="Banno F."/>
            <person name="Bowser L."/>
            <person name="Brooks S.Y."/>
            <person name="Carninci P."/>
            <person name="Chao Q."/>
            <person name="Choy N."/>
            <person name="Enju A."/>
            <person name="Goldsmith A.D."/>
            <person name="Gurjal M."/>
            <person name="Hansen N.F."/>
            <person name="Hayashizaki Y."/>
            <person name="Johnson-Hopson C."/>
            <person name="Hsuan V.W."/>
            <person name="Iida K."/>
            <person name="Karnes M."/>
            <person name="Khan S."/>
            <person name="Koesema E."/>
            <person name="Ishida J."/>
            <person name="Jiang P.X."/>
            <person name="Jones T."/>
            <person name="Kawai J."/>
            <person name="Kamiya A."/>
            <person name="Meyers C."/>
            <person name="Nakajima M."/>
            <person name="Narusaka M."/>
            <person name="Seki M."/>
            <person name="Sakurai T."/>
            <person name="Satou M."/>
            <person name="Tamse R."/>
            <person name="Vaysberg M."/>
            <person name="Wallender E.K."/>
            <person name="Wong C."/>
            <person name="Yamamura Y."/>
            <person name="Yuan S."/>
            <person name="Shinozaki K."/>
            <person name="Davis R.W."/>
            <person name="Theologis A."/>
            <person name="Ecker J.R."/>
        </authorList>
    </citation>
    <scope>NUCLEOTIDE SEQUENCE [LARGE SCALE MRNA] (ISOFORM 1)</scope>
    <source>
        <strain>cv. Columbia</strain>
    </source>
</reference>
<reference key="4">
    <citation type="submission" date="2005-01" db="EMBL/GenBank/DDBJ databases">
        <title>Arabidopsis ORF clones.</title>
        <authorList>
            <person name="Kim C.J."/>
            <person name="Chen H."/>
            <person name="Cheuk R.F."/>
            <person name="Shinn P."/>
            <person name="Ecker J.R."/>
        </authorList>
    </citation>
    <scope>NUCLEOTIDE SEQUENCE [LARGE SCALE MRNA] (ISOFORM 2)</scope>
    <source>
        <strain>cv. Columbia</strain>
    </source>
</reference>
<reference key="5">
    <citation type="journal article" date="2004" name="Plant Physiol.">
        <title>The GATA family of transcription factors in Arabidopsis and rice.</title>
        <authorList>
            <person name="Reyes J.C."/>
            <person name="Muro-Pastor M.I."/>
            <person name="Florencio F.J."/>
        </authorList>
    </citation>
    <scope>GENE FAMILY ORGANIZATION</scope>
</reference>
<reference key="6">
    <citation type="journal article" date="2008" name="Plant Physiol.">
        <title>Two GATA transcription factors are downstream effectors of floral homeotic gene action in Arabidopsis.</title>
        <authorList>
            <person name="Mara C.D."/>
            <person name="Irish V.F."/>
        </authorList>
    </citation>
    <scope>FUNCTION</scope>
    <scope>DISRUPTION PHENOTYPE</scope>
    <scope>REGULATION BY AP3/PI</scope>
    <scope>TISSUE SPECIFICITY</scope>
    <scope>DEVELOPMENTAL STAGE</scope>
</reference>
<reference key="7">
    <citation type="journal article" date="2010" name="Genes Dev.">
        <title>The GATA-type transcription factors GNC and GNL/CGA1 repress gibberellin signaling downstream from DELLA proteins and PHYTOCHROME-INTERACTING FACTORS.</title>
        <authorList>
            <person name="Richter R."/>
            <person name="Behringer C."/>
            <person name="Mueller I.K."/>
            <person name="Schwechheimer C."/>
        </authorList>
    </citation>
    <scope>FUNCTION</scope>
    <scope>DISRUPTION PHENOTYPE</scope>
    <scope>INDUCTION BY GIBBERELLIC ACID AND COLD SEED IMBIBITION</scope>
    <scope>DEVELOPMENTAL STAGE</scope>
</reference>
<reference key="8">
    <citation type="journal article" date="2010" name="J. Mol. Biol.">
        <title>PAH-domain-specific interactions of the Arabidopsis transcription coregulator SIN3-LIKE1 (SNL1) with telomere-binding protein 1 and ALWAYS EARLY2 Myb-DNA binding factors.</title>
        <authorList>
            <person name="Bowen A.J."/>
            <person name="Gonzalez D."/>
            <person name="Mullins J.G."/>
            <person name="Bhatt A.M."/>
            <person name="Martinez A."/>
            <person name="Conlan R.S."/>
        </authorList>
    </citation>
    <scope>INTERACTION WITH SNL1</scope>
</reference>
<reference key="9">
    <citation type="journal article" date="2011" name="PLoS ONE">
        <title>GNC and CGA1 modulate chlorophyll biosynthesis and glutamate synthase (GLU1/Fd-GOGAT) expression in Arabidopsis.</title>
        <authorList>
            <person name="Hudson D."/>
            <person name="Guevara D."/>
            <person name="Yaish M.W."/>
            <person name="Hannam C."/>
            <person name="Long N."/>
            <person name="Clarke J.D."/>
            <person name="Bi Y.-M."/>
            <person name="Rothstein S.J."/>
        </authorList>
    </citation>
    <scope>FUNCTION</scope>
    <scope>DISRUPTION PHENOTYPE</scope>
</reference>
<reference key="10">
    <citation type="journal article" date="2012" name="Plant Physiol.">
        <title>Functional characterization of the GATA transcription factors GNC and CGA1 reveals their key role in chloroplast development, growth, and division in Arabidopsis.</title>
        <authorList>
            <person name="Chiang Y.-H."/>
            <person name="Zubo Y.O."/>
            <person name="Tapken W."/>
            <person name="Kim H.J."/>
            <person name="Lavanway A.M."/>
            <person name="Howard L."/>
            <person name="Pilon M."/>
            <person name="Kieber J.J."/>
            <person name="Schaller G.E."/>
        </authorList>
    </citation>
    <scope>FUNCTION</scope>
    <scope>DISRUPTION PHENOTYPE</scope>
    <scope>TISSUE SPECIFICITY</scope>
    <scope>DEVELOPMENTAL STAGE</scope>
    <scope>INDUCTION BY CYTOKININ</scope>
    <scope>SUBCELLULAR LOCATION</scope>
</reference>
<reference key="11">
    <citation type="journal article" date="2013" name="Plant Cell">
        <title>Transcription repressor HANABA TARANU controls flower development by integrating the actions of multiple hormones, floral organ specification genes, and GATA3 family genes in Arabidopsis.</title>
        <authorList>
            <person name="Zhang X."/>
            <person name="Zhou Y."/>
            <person name="Ding L."/>
            <person name="Wu Z."/>
            <person name="Liu R."/>
            <person name="Meyerowitz E.M."/>
        </authorList>
    </citation>
    <scope>REPRESSION BY HAN</scope>
    <scope>INTERACTION WITH GATA18</scope>
    <scope>DEVELOPMENTAL STAGE</scope>
</reference>
<reference key="12">
    <citation type="journal article" date="2013" name="Plant Physiol.">
        <title>Cross-repressive interactions between SOC1 and the GATAs GNC and GNL/CGA1 in the control of greening, cold tolerance, and flowering time in Arabidopsis.</title>
        <authorList>
            <person name="Richter R."/>
            <person name="Bastakis E."/>
            <person name="Schwechheimer C."/>
        </authorList>
    </citation>
    <scope>FUNCTION</scope>
    <scope>REGULATION BY SOC1</scope>
</reference>
<reference key="13">
    <citation type="journal article" date="2013" name="Proc. Natl. Acad. Sci. U.S.A.">
        <title>Convergence of auxin and gibberellin signaling on the regulation of the GATA transcription factors GNC and GNL in Arabidopsis thaliana.</title>
        <authorList>
            <person name="Richter R."/>
            <person name="Behringer C."/>
            <person name="Zourelidou M."/>
            <person name="Schwechheimer C."/>
        </authorList>
    </citation>
    <scope>FUNCTION</scope>
    <scope>REGULATION BY AUXIN RESPONSE FACTORS</scope>
    <scope>REPRESSION BY AUXIN</scope>
</reference>
<reference key="14">
    <citation type="journal article" date="2014" name="Plant Physiol.">
        <title>Functional diversification within the family of B-GATA transcription factors through the leucine-leucine-methionine domain.</title>
        <authorList>
            <person name="Behringer C."/>
            <person name="Bastakis E."/>
            <person name="Ranftl Q.L."/>
            <person name="Mayer K.F."/>
            <person name="Schwechheimer C."/>
        </authorList>
    </citation>
    <scope>FUNCTION</scope>
    <scope>MUTAGENESIS OF 387-LEU--MET-389</scope>
    <scope>GENE FAMILY</scope>
    <scope>REVIEW</scope>
</reference>
<reference key="15">
    <citation type="journal article" date="2015" name="Front. Plant Sci.">
        <title>B-GATA transcription factors - insights into their structure, regulation, and role in plant development.</title>
        <authorList>
            <person name="Behringer C."/>
            <person name="Schwechheimer C."/>
        </authorList>
    </citation>
    <scope>GENE FAMILY</scope>
    <scope>REVIEW</scope>
</reference>
<dbReference type="EMBL" id="AB020747">
    <property type="protein sequence ID" value="BAA97205.1"/>
    <property type="molecule type" value="Genomic_DNA"/>
</dbReference>
<dbReference type="EMBL" id="CP002688">
    <property type="protein sequence ID" value="AED96815.1"/>
    <property type="molecule type" value="Genomic_DNA"/>
</dbReference>
<dbReference type="EMBL" id="AY065074">
    <property type="protein sequence ID" value="AAL38250.1"/>
    <property type="molecule type" value="mRNA"/>
</dbReference>
<dbReference type="EMBL" id="BT020488">
    <property type="protein sequence ID" value="AAW38989.1"/>
    <property type="molecule type" value="mRNA"/>
</dbReference>
<dbReference type="RefSeq" id="NP_200497.1">
    <molecule id="Q5HZ36-1"/>
    <property type="nucleotide sequence ID" value="NM_125069.3"/>
</dbReference>
<dbReference type="SMR" id="Q5HZ36"/>
<dbReference type="BioGRID" id="21032">
    <property type="interactions" value="9"/>
</dbReference>
<dbReference type="FunCoup" id="Q5HZ36">
    <property type="interactions" value="613"/>
</dbReference>
<dbReference type="IntAct" id="Q5HZ36">
    <property type="interactions" value="9"/>
</dbReference>
<dbReference type="STRING" id="3702.Q5HZ36"/>
<dbReference type="PaxDb" id="3702-AT5G56860.1"/>
<dbReference type="ProteomicsDB" id="247390">
    <molecule id="Q5HZ36-1"/>
</dbReference>
<dbReference type="EnsemblPlants" id="AT5G56860.1">
    <molecule id="Q5HZ36-1"/>
    <property type="protein sequence ID" value="AT5G56860.1"/>
    <property type="gene ID" value="AT5G56860"/>
</dbReference>
<dbReference type="GeneID" id="835788"/>
<dbReference type="Gramene" id="AT5G56860.1">
    <molecule id="Q5HZ36-1"/>
    <property type="protein sequence ID" value="AT5G56860.1"/>
    <property type="gene ID" value="AT5G56860"/>
</dbReference>
<dbReference type="KEGG" id="ath:AT5G56860"/>
<dbReference type="Araport" id="AT5G56860"/>
<dbReference type="TAIR" id="AT5G56860">
    <property type="gene designation" value="GNC"/>
</dbReference>
<dbReference type="eggNOG" id="KOG1601">
    <property type="taxonomic scope" value="Eukaryota"/>
</dbReference>
<dbReference type="HOGENOM" id="CLU_060197_0_1_1"/>
<dbReference type="InParanoid" id="Q5HZ36"/>
<dbReference type="OMA" id="DSDKWLM"/>
<dbReference type="PhylomeDB" id="Q5HZ36"/>
<dbReference type="PRO" id="PR:Q5HZ36"/>
<dbReference type="Proteomes" id="UP000006548">
    <property type="component" value="Chromosome 5"/>
</dbReference>
<dbReference type="ExpressionAtlas" id="Q5HZ36">
    <property type="expression patterns" value="baseline and differential"/>
</dbReference>
<dbReference type="GO" id="GO:0005634">
    <property type="term" value="C:nucleus"/>
    <property type="evidence" value="ECO:0000315"/>
    <property type="project" value="UniProtKB"/>
</dbReference>
<dbReference type="GO" id="GO:0003700">
    <property type="term" value="F:DNA-binding transcription factor activity"/>
    <property type="evidence" value="ECO:0000250"/>
    <property type="project" value="TAIR"/>
</dbReference>
<dbReference type="GO" id="GO:0000976">
    <property type="term" value="F:transcription cis-regulatory region binding"/>
    <property type="evidence" value="ECO:0000314"/>
    <property type="project" value="TAIR"/>
</dbReference>
<dbReference type="GO" id="GO:0008270">
    <property type="term" value="F:zinc ion binding"/>
    <property type="evidence" value="ECO:0007669"/>
    <property type="project" value="UniProtKB-KW"/>
</dbReference>
<dbReference type="GO" id="GO:0010151">
    <property type="term" value="P:chloroplast elongation"/>
    <property type="evidence" value="ECO:0000315"/>
    <property type="project" value="UniProtKB"/>
</dbReference>
<dbReference type="GO" id="GO:0009658">
    <property type="term" value="P:chloroplast organization"/>
    <property type="evidence" value="ECO:0000315"/>
    <property type="project" value="UniProtKB"/>
</dbReference>
<dbReference type="GO" id="GO:0007623">
    <property type="term" value="P:circadian rhythm"/>
    <property type="evidence" value="ECO:0000270"/>
    <property type="project" value="TAIR"/>
</dbReference>
<dbReference type="GO" id="GO:0009736">
    <property type="term" value="P:cytokinin-activated signaling pathway"/>
    <property type="evidence" value="ECO:0000315"/>
    <property type="project" value="UniProtKB"/>
</dbReference>
<dbReference type="GO" id="GO:0009740">
    <property type="term" value="P:gibberellic acid mediated signaling pathway"/>
    <property type="evidence" value="ECO:0000270"/>
    <property type="project" value="TAIR"/>
</dbReference>
<dbReference type="GO" id="GO:0010255">
    <property type="term" value="P:glucose mediated signaling pathway"/>
    <property type="evidence" value="ECO:0000315"/>
    <property type="project" value="TAIR"/>
</dbReference>
<dbReference type="GO" id="GO:0009910">
    <property type="term" value="P:negative regulation of flower development"/>
    <property type="evidence" value="ECO:0000315"/>
    <property type="project" value="TAIR"/>
</dbReference>
<dbReference type="GO" id="GO:0009938">
    <property type="term" value="P:negative regulation of gibberellic acid mediated signaling pathway"/>
    <property type="evidence" value="ECO:0000315"/>
    <property type="project" value="UniProtKB"/>
</dbReference>
<dbReference type="GO" id="GO:0010187">
    <property type="term" value="P:negative regulation of seed germination"/>
    <property type="evidence" value="ECO:0000270"/>
    <property type="project" value="TAIR"/>
</dbReference>
<dbReference type="GO" id="GO:0090693">
    <property type="term" value="P:plant organ senescence"/>
    <property type="evidence" value="ECO:0000315"/>
    <property type="project" value="UniProtKB"/>
</dbReference>
<dbReference type="GO" id="GO:1902326">
    <property type="term" value="P:positive regulation of chlorophyll biosynthetic process"/>
    <property type="evidence" value="ECO:0000315"/>
    <property type="project" value="UniProtKB"/>
</dbReference>
<dbReference type="GO" id="GO:0043610">
    <property type="term" value="P:regulation of carbohydrate utilization"/>
    <property type="evidence" value="ECO:0000315"/>
    <property type="project" value="UniProtKB"/>
</dbReference>
<dbReference type="GO" id="GO:0010380">
    <property type="term" value="P:regulation of chlorophyll biosynthetic process"/>
    <property type="evidence" value="ECO:0000315"/>
    <property type="project" value="TAIR"/>
</dbReference>
<dbReference type="GO" id="GO:0006355">
    <property type="term" value="P:regulation of DNA-templated transcription"/>
    <property type="evidence" value="ECO:0000315"/>
    <property type="project" value="TAIR"/>
</dbReference>
<dbReference type="GO" id="GO:0010468">
    <property type="term" value="P:regulation of gene expression"/>
    <property type="evidence" value="ECO:0000314"/>
    <property type="project" value="TAIR"/>
</dbReference>
<dbReference type="GO" id="GO:2000028">
    <property type="term" value="P:regulation of photoperiodism, flowering"/>
    <property type="evidence" value="ECO:0000315"/>
    <property type="project" value="UniProtKB"/>
</dbReference>
<dbReference type="GO" id="GO:0080050">
    <property type="term" value="P:regulation of seed development"/>
    <property type="evidence" value="ECO:0000315"/>
    <property type="project" value="UniProtKB"/>
</dbReference>
<dbReference type="GO" id="GO:0010029">
    <property type="term" value="P:regulation of seed germination"/>
    <property type="evidence" value="ECO:0000315"/>
    <property type="project" value="UniProtKB"/>
</dbReference>
<dbReference type="GO" id="GO:0009733">
    <property type="term" value="P:response to auxin"/>
    <property type="evidence" value="ECO:0000270"/>
    <property type="project" value="UniProtKB"/>
</dbReference>
<dbReference type="GO" id="GO:0009735">
    <property type="term" value="P:response to cytokinin"/>
    <property type="evidence" value="ECO:0000270"/>
    <property type="project" value="UniProtKB"/>
</dbReference>
<dbReference type="GO" id="GO:0009739">
    <property type="term" value="P:response to gibberellin"/>
    <property type="evidence" value="ECO:0000270"/>
    <property type="project" value="UniProtKB"/>
</dbReference>
<dbReference type="GO" id="GO:0009416">
    <property type="term" value="P:response to light stimulus"/>
    <property type="evidence" value="ECO:0000270"/>
    <property type="project" value="TAIR"/>
</dbReference>
<dbReference type="CDD" id="cd00202">
    <property type="entry name" value="ZnF_GATA"/>
    <property type="match status" value="1"/>
</dbReference>
<dbReference type="FunFam" id="3.30.50.10:FF:000055">
    <property type="entry name" value="GATA transcription factor 21"/>
    <property type="match status" value="1"/>
</dbReference>
<dbReference type="Gene3D" id="3.30.50.10">
    <property type="entry name" value="Erythroid Transcription Factor GATA-1, subunit A"/>
    <property type="match status" value="1"/>
</dbReference>
<dbReference type="InterPro" id="IPR052138">
    <property type="entry name" value="GATA_ZnFinger_Domain"/>
</dbReference>
<dbReference type="InterPro" id="IPR000679">
    <property type="entry name" value="Znf_GATA"/>
</dbReference>
<dbReference type="InterPro" id="IPR013088">
    <property type="entry name" value="Znf_NHR/GATA"/>
</dbReference>
<dbReference type="PANTHER" id="PTHR47255:SF12">
    <property type="entry name" value="GATA TRANSCRIPTION FACTOR 21"/>
    <property type="match status" value="1"/>
</dbReference>
<dbReference type="PANTHER" id="PTHR47255">
    <property type="entry name" value="GATA TRANSCRIPTION FACTOR 22-RELATED"/>
    <property type="match status" value="1"/>
</dbReference>
<dbReference type="Pfam" id="PF00320">
    <property type="entry name" value="GATA"/>
    <property type="match status" value="1"/>
</dbReference>
<dbReference type="SMART" id="SM00401">
    <property type="entry name" value="ZnF_GATA"/>
    <property type="match status" value="1"/>
</dbReference>
<dbReference type="SUPFAM" id="SSF57716">
    <property type="entry name" value="Glucocorticoid receptor-like (DNA-binding domain)"/>
    <property type="match status" value="1"/>
</dbReference>
<dbReference type="PROSITE" id="PS00344">
    <property type="entry name" value="GATA_ZN_FINGER_1"/>
    <property type="match status" value="1"/>
</dbReference>
<dbReference type="PROSITE" id="PS50114">
    <property type="entry name" value="GATA_ZN_FINGER_2"/>
    <property type="match status" value="1"/>
</dbReference>
<protein>
    <recommendedName>
        <fullName evidence="13">GATA transcription factor 21</fullName>
    </recommendedName>
    <alternativeName>
        <fullName evidence="14">Protein GATA, NITRATE-INDUCIBLE, CARBON-METABOLISM INVOLVED</fullName>
        <shortName evidence="15">AtGNC</shortName>
    </alternativeName>
</protein>
<name>GAT21_ARATH</name>
<sequence length="398" mass="44840">MDSNFHYSIDLNEDQNHHEQPFFYPLGSSSSLHHHHHHHHHQVPSNSSSSSSSISSLSSYLPFLINSQEDQHVAYNNTYHADHLHLSQPLKAKMFVANGGSSACDHMVPKKETRLKLTIRKKDHEDQPHPLHQNPTKPDSDSDKWLMSPKMRLIKKTITNNKQLIDQTNNNNHKESDHYPLNHKTNFDEDHHEDLNFKNVLTRKTTAATTENRYNTINENGYSNNNGVIRVCSDCNTTKTPLWRSGPRGPKSLCNACGIRQRKARRAAMAAAAAAGDQEVAVAPRVQQLPLKKKLQNKKKRSNGGEKYNHSPPMVAKAKKCKIKEEEEKEMEAETVAGDSEISKSTTSSNSSISSNKFCFDDLTIMLSKSSAYQQVFPQDEKEAAVLLMALSYGMVHG</sequence>
<keyword id="KW-0025">Alternative splicing</keyword>
<keyword id="KW-0932">Cytokinin signaling pathway</keyword>
<keyword id="KW-0238">DNA-binding</keyword>
<keyword id="KW-0939">Gibberellin signaling pathway</keyword>
<keyword id="KW-0479">Metal-binding</keyword>
<keyword id="KW-0539">Nucleus</keyword>
<keyword id="KW-1185">Reference proteome</keyword>
<keyword id="KW-0804">Transcription</keyword>
<keyword id="KW-0805">Transcription regulation</keyword>
<keyword id="KW-0862">Zinc</keyword>
<keyword id="KW-0863">Zinc-finger</keyword>
<gene>
    <name evidence="13" type="primary">GATA21</name>
    <name evidence="14" type="synonym">GNC</name>
    <name evidence="18" type="ordered locus">At5g56860</name>
    <name evidence="19" type="ORF">MPI10.2</name>
</gene>
<feature type="chain" id="PRO_0000083453" description="GATA transcription factor 21">
    <location>
        <begin position="1"/>
        <end position="398"/>
    </location>
</feature>
<feature type="zinc finger region" description="GATA-type" evidence="1">
    <location>
        <begin position="226"/>
        <end position="280"/>
    </location>
</feature>
<feature type="region of interest" description="Disordered" evidence="3">
    <location>
        <begin position="20"/>
        <end position="51"/>
    </location>
</feature>
<feature type="region of interest" description="Disordered" evidence="3">
    <location>
        <begin position="122"/>
        <end position="144"/>
    </location>
</feature>
<feature type="region of interest" description="Disordered" evidence="3">
    <location>
        <begin position="289"/>
        <end position="353"/>
    </location>
</feature>
<feature type="short sequence motif" description="Nuclear localization signal" evidence="2">
    <location>
        <begin position="109"/>
        <end position="116"/>
    </location>
</feature>
<feature type="compositionally biased region" description="Basic residues" evidence="3">
    <location>
        <begin position="32"/>
        <end position="42"/>
    </location>
</feature>
<feature type="compositionally biased region" description="Basic residues" evidence="3">
    <location>
        <begin position="291"/>
        <end position="302"/>
    </location>
</feature>
<feature type="compositionally biased region" description="Low complexity" evidence="3">
    <location>
        <begin position="343"/>
        <end position="353"/>
    </location>
</feature>
<feature type="splice variant" id="VSP_013708" description="In isoform 2." evidence="16">
    <location>
        <begin position="91"/>
        <end position="250"/>
    </location>
</feature>
<feature type="mutagenesis site" description="Increased inhibition of germination by paclobutrazol (PAC), a gibberellic acid (GA) biosynthesis inhibitor. Slight reduction of hypocotyl elongation, with rounder leaves and shortened petioles." evidence="12">
    <original>LLM</original>
    <variation>AAA</variation>
    <location>
        <begin position="387"/>
        <end position="389"/>
    </location>
</feature>
<feature type="sequence conflict" description="In Ref. 3; AAL38250." evidence="17" ref="3">
    <original>K</original>
    <variation>N</variation>
    <location>
        <position position="294"/>
    </location>
</feature>
<evidence type="ECO:0000255" key="1">
    <source>
        <dbReference type="PROSITE-ProRule" id="PRU00094"/>
    </source>
</evidence>
<evidence type="ECO:0000255" key="2">
    <source>
        <dbReference type="PROSITE-ProRule" id="PRU00768"/>
    </source>
</evidence>
<evidence type="ECO:0000256" key="3">
    <source>
        <dbReference type="SAM" id="MobiDB-lite"/>
    </source>
</evidence>
<evidence type="ECO:0000269" key="4">
    <source>
    </source>
</evidence>
<evidence type="ECO:0000269" key="5">
    <source>
    </source>
</evidence>
<evidence type="ECO:0000269" key="6">
    <source>
    </source>
</evidence>
<evidence type="ECO:0000269" key="7">
    <source>
    </source>
</evidence>
<evidence type="ECO:0000269" key="8">
    <source>
    </source>
</evidence>
<evidence type="ECO:0000269" key="9">
    <source>
    </source>
</evidence>
<evidence type="ECO:0000269" key="10">
    <source>
    </source>
</evidence>
<evidence type="ECO:0000269" key="11">
    <source>
    </source>
</evidence>
<evidence type="ECO:0000269" key="12">
    <source>
    </source>
</evidence>
<evidence type="ECO:0000303" key="13">
    <source>
    </source>
</evidence>
<evidence type="ECO:0000303" key="14">
    <source>
    </source>
</evidence>
<evidence type="ECO:0000303" key="15">
    <source>
    </source>
</evidence>
<evidence type="ECO:0000303" key="16">
    <source ref="4"/>
</evidence>
<evidence type="ECO:0000305" key="17"/>
<evidence type="ECO:0000312" key="18">
    <source>
        <dbReference type="Araport" id="AT5G56860"/>
    </source>
</evidence>
<evidence type="ECO:0000312" key="19">
    <source>
        <dbReference type="EMBL" id="BAA97205.1"/>
    </source>
</evidence>
<accession>Q5HZ36</accession>
<accession>Q8VZC1</accession>
<accession>Q9LV39</accession>
<organism>
    <name type="scientific">Arabidopsis thaliana</name>
    <name type="common">Mouse-ear cress</name>
    <dbReference type="NCBI Taxonomy" id="3702"/>
    <lineage>
        <taxon>Eukaryota</taxon>
        <taxon>Viridiplantae</taxon>
        <taxon>Streptophyta</taxon>
        <taxon>Embryophyta</taxon>
        <taxon>Tracheophyta</taxon>
        <taxon>Spermatophyta</taxon>
        <taxon>Magnoliopsida</taxon>
        <taxon>eudicotyledons</taxon>
        <taxon>Gunneridae</taxon>
        <taxon>Pentapetalae</taxon>
        <taxon>rosids</taxon>
        <taxon>malvids</taxon>
        <taxon>Brassicales</taxon>
        <taxon>Brassicaceae</taxon>
        <taxon>Camelineae</taxon>
        <taxon>Arabidopsis</taxon>
    </lineage>
</organism>
<proteinExistence type="evidence at protein level"/>
<comment type="function">
    <text evidence="4 6 7 8 10 11 12">Transcriptional regulator that specifically binds 5'-GATA-3' or 5'-GAT-3' motifs within gene promoters (PubMed:22102866, PubMed:25077795). Involved in the modulation of chloroplast development, growth and division in a cytokinin-dependent manner (PubMed:22102866, PubMed:22811435). Repressor of the gibberellic acid (GA) signaling pathway that represses flowering and modulates greening, in a SOC1-dependent manner (PubMed:20844019, PubMed:23739688, PubMed:25077795). Prevents the accumulation of SOC1 during flowering (PubMed:23739688). Promotes chlorophyll biosynthesis throughout the plant, by regulating chlorophyll biosynthetic genes (e.g. HEMA1 and GUN4) and chloroplast localized glutamate synthase (e.g. GLU1) (PubMed:18417639, PubMed:20844019, PubMed:22102866, PubMed:23878229, PubMed:25077795). Involved in the regulation of sugar-sensing genes (e.g. HXK1, HXK2, STP13 and PLT6) (PubMed:18417639). Regulator of germination, senescence, elongation growth and flowering time (PubMed:20844019, PubMed:22102866, PubMed:23878229). Also influences leaf starch content (PubMed:22102866).</text>
</comment>
<comment type="subunit">
    <text evidence="5 9">Interacts with SNL1 (PubMed:19962994). Forms heterodimers with GATA18 (PubMed:23335616).</text>
</comment>
<comment type="subcellular location">
    <subcellularLocation>
        <location evidence="1 8">Nucleus</location>
    </subcellularLocation>
</comment>
<comment type="alternative products">
    <event type="alternative splicing"/>
    <isoform>
        <id>Q5HZ36-1</id>
        <name>1</name>
        <sequence type="displayed"/>
    </isoform>
    <isoform>
        <id>Q5HZ36-2</id>
        <name>2</name>
        <sequence type="described" ref="VSP_013708"/>
    </isoform>
</comment>
<comment type="tissue specificity">
    <text evidence="4 8">Expressed predominantly in leaves, and barely in stems, flowers and siliques.</text>
</comment>
<comment type="developmental stage">
    <text evidence="4 6 8 9">First observed in the inflorescence meristem (IM) and young flower buds (PubMed:23335616). Detected throughout the floral bud. In young flowers, restricted to the inner whorls, specifically the petals, stamens, and carpels (PubMed:18417639, PubMed:23335616). In older flowers, present in the petals, stamen filaments and carpels, with weaker expression in the anthers of the stamens (PubMed:18417639). Observed in anther locules, vascular strands, and ovules (PubMed:23335616). During imbibition, expressed in the endosperm, especially at the time of testa rupture. Later restricted to the embryonic root (PubMed:20844019). In mature embryos, observed in the cotyledons and hypocotyl. In young seedlings, mostly expressed in shoot tissues, including the tip, circumference, and vasculature of the cotyledons, the emerging leaves, the meristematic region, and the basal part of the hypocotyl, and, at low levels, in the primary roots. In older seedlings, accumulates in the green shoot tissues (PubMed:22811435).</text>
</comment>
<comment type="induction">
    <text evidence="4 6 8 9 10 11">Activated by gibberellic acid (GA) (PubMed:20844019). Negatively regulated by AP3/PI (PubMed:18417639). Strong accumulation during cold imbibition of nondormant seeds, but not at warm temperatures. Regulated by PIF transcription factors (PubMed:20844019). Induced by cytokinin (e.g. benzyladenine) (PubMed:22811435). Repressed by HAN (PubMed:23335616). Inhibited by SOC1 (PubMed:23739688). Down-regulated by auxin (2,4D) and auxin response factors (e.g. ARF2 and ARF7) (PubMed:23878229).</text>
</comment>
<comment type="disruption phenotype">
    <text evidence="4 6 7 8">Pale green leaves and reduced chlorophyll levels associated with altered regulation of sugar-sensing genes (e.g. HXK1, HXK2, STP13 and PLT6) (PubMed:18417639, PubMed:22102866, PubMed:22811435). Reduced chloroplast size (PubMed:22811435). Faster seed germination. Early flowering. Increased leaves size (PubMed:20844019, PubMed:22102866). Reduced gibberellic acid (GA) levels due to increased GA turnover and associated with reduced expression of GA-anabolizing enzymes (e.g. GA3OX1) but increased expression of GA-catabolizing enzymes (e.g. GA2OX2) (PubMed:20844019). Small seeds with deformed seed coats (PubMed:22102866). The double mutant gnc cga1, lacking both GATA22 and GATA21, exhibits reduced sensitivity to cytokinin (e.g. benzyladenine) toward chloroplasts growth (PubMed:22811435).</text>
</comment>
<comment type="miscellaneous">
    <molecule>Isoform 2</molecule>
    <text evidence="17">May be due to a competing acceptor splice site.</text>
</comment>
<comment type="similarity">
    <text evidence="17">Belongs to the type IV zinc-finger family. Class B subfamily.</text>
</comment>